<feature type="chain" id="PRO_0000126094" description="Anaerobic glycerol-3-phosphate dehydrogenase subunit A">
    <location>
        <begin position="1"/>
        <end position="542"/>
    </location>
</feature>
<feature type="binding site" evidence="2">
    <location>
        <begin position="10"/>
        <end position="38"/>
    </location>
    <ligand>
        <name>FAD</name>
        <dbReference type="ChEBI" id="CHEBI:57692"/>
    </ligand>
</feature>
<comment type="function">
    <text evidence="1">Conversion of glycerol 3-phosphate to dihydroxyacetone. Uses fumarate or nitrate as electron acceptor (By similarity).</text>
</comment>
<comment type="catalytic activity">
    <reaction>
        <text>a quinone + sn-glycerol 3-phosphate = dihydroxyacetone phosphate + a quinol</text>
        <dbReference type="Rhea" id="RHEA:18977"/>
        <dbReference type="ChEBI" id="CHEBI:24646"/>
        <dbReference type="ChEBI" id="CHEBI:57597"/>
        <dbReference type="ChEBI" id="CHEBI:57642"/>
        <dbReference type="ChEBI" id="CHEBI:132124"/>
        <dbReference type="EC" id="1.1.5.3"/>
    </reaction>
</comment>
<comment type="cofactor">
    <cofactor evidence="1">
        <name>FAD</name>
        <dbReference type="ChEBI" id="CHEBI:57692"/>
    </cofactor>
</comment>
<comment type="cofactor">
    <cofactor evidence="1">
        <name>FMN</name>
        <dbReference type="ChEBI" id="CHEBI:58210"/>
    </cofactor>
</comment>
<comment type="pathway">
    <text>Polyol metabolism; glycerol degradation via glycerol kinase pathway; glycerone phosphate from sn-glycerol 3-phosphate (anaerobic route): step 1/1.</text>
</comment>
<comment type="subunit">
    <text evidence="1">Composed of a catalytic GlpA/B dimer and of membrane bound GlpC.</text>
</comment>
<comment type="subcellular location">
    <subcellularLocation>
        <location evidence="1">Cell inner membrane</location>
        <topology evidence="1">Peripheral membrane protein</topology>
    </subcellularLocation>
    <text evidence="1">Loosely bound to the cytoplasmic membrane often occurring in vesicles associated with fumarate reductase.</text>
</comment>
<comment type="similarity">
    <text evidence="3">Belongs to the FAD-dependent glycerol-3-phosphate dehydrogenase family.</text>
</comment>
<reference key="1">
    <citation type="journal article" date="2001" name="Nature">
        <title>Genome sequence of enterohaemorrhagic Escherichia coli O157:H7.</title>
        <authorList>
            <person name="Perna N.T."/>
            <person name="Plunkett G. III"/>
            <person name="Burland V."/>
            <person name="Mau B."/>
            <person name="Glasner J.D."/>
            <person name="Rose D.J."/>
            <person name="Mayhew G.F."/>
            <person name="Evans P.S."/>
            <person name="Gregor J."/>
            <person name="Kirkpatrick H.A."/>
            <person name="Posfai G."/>
            <person name="Hackett J."/>
            <person name="Klink S."/>
            <person name="Boutin A."/>
            <person name="Shao Y."/>
            <person name="Miller L."/>
            <person name="Grotbeck E.J."/>
            <person name="Davis N.W."/>
            <person name="Lim A."/>
            <person name="Dimalanta E.T."/>
            <person name="Potamousis K."/>
            <person name="Apodaca J."/>
            <person name="Anantharaman T.S."/>
            <person name="Lin J."/>
            <person name="Yen G."/>
            <person name="Schwartz D.C."/>
            <person name="Welch R.A."/>
            <person name="Blattner F.R."/>
        </authorList>
    </citation>
    <scope>NUCLEOTIDE SEQUENCE [LARGE SCALE GENOMIC DNA]</scope>
    <source>
        <strain>O157:H7 / EDL933 / ATCC 700927 / EHEC</strain>
    </source>
</reference>
<reference key="2">
    <citation type="journal article" date="2001" name="DNA Res.">
        <title>Complete genome sequence of enterohemorrhagic Escherichia coli O157:H7 and genomic comparison with a laboratory strain K-12.</title>
        <authorList>
            <person name="Hayashi T."/>
            <person name="Makino K."/>
            <person name="Ohnishi M."/>
            <person name="Kurokawa K."/>
            <person name="Ishii K."/>
            <person name="Yokoyama K."/>
            <person name="Han C.-G."/>
            <person name="Ohtsubo E."/>
            <person name="Nakayama K."/>
            <person name="Murata T."/>
            <person name="Tanaka M."/>
            <person name="Tobe T."/>
            <person name="Iida T."/>
            <person name="Takami H."/>
            <person name="Honda T."/>
            <person name="Sasakawa C."/>
            <person name="Ogasawara N."/>
            <person name="Yasunaga T."/>
            <person name="Kuhara S."/>
            <person name="Shiba T."/>
            <person name="Hattori M."/>
            <person name="Shinagawa H."/>
        </authorList>
    </citation>
    <scope>NUCLEOTIDE SEQUENCE [LARGE SCALE GENOMIC DNA]</scope>
    <source>
        <strain>O157:H7 / Sakai / RIMD 0509952 / EHEC</strain>
    </source>
</reference>
<organism>
    <name type="scientific">Escherichia coli O157:H7</name>
    <dbReference type="NCBI Taxonomy" id="83334"/>
    <lineage>
        <taxon>Bacteria</taxon>
        <taxon>Pseudomonadati</taxon>
        <taxon>Pseudomonadota</taxon>
        <taxon>Gammaproteobacteria</taxon>
        <taxon>Enterobacterales</taxon>
        <taxon>Enterobacteriaceae</taxon>
        <taxon>Escherichia</taxon>
    </lineage>
</organism>
<protein>
    <recommendedName>
        <fullName>Anaerobic glycerol-3-phosphate dehydrogenase subunit A</fullName>
        <shortName>G-3-P dehydrogenase</shortName>
        <ecNumber>1.1.5.3</ecNumber>
    </recommendedName>
</protein>
<evidence type="ECO:0000250" key="1"/>
<evidence type="ECO:0000255" key="2"/>
<evidence type="ECO:0000305" key="3"/>
<proteinExistence type="inferred from homology"/>
<name>GLPA_ECO57</name>
<sequence>MKTRDSQSSDVIIIGGGATGAGIARDCALRGLRVILVERHDIATGATGRNHGLLHSGARYAVTDAESARECISENQILKRIARHCVEPTNGLFITLPEDDLSFQATFIRACEEAGISAEAIDPQQARIIEPAVNPALIGAVKVPDGTVDPFRLTAANMLDAKEHGAVILTAHEVTGLIREGATVCGVRVRNHLTGETQALHAPVVVNAAGIWGQHIAEYADLRIRMFPAKGSLLIMDHRINQHVINRCRKPSDADILVPGDTISLIGTTSLRIDYNEIDDNRVTAEEVDILLREGEKLAPVMAKTRILRAYSGVRPLVASDDDPSGRNVSRGIVLLDHAERDGLDGFITITGGKLMTYRLMAEWATDAVCRKLGNTRPCTTADLALPGSQEPAEVTLRKVISLPAPLRGSAVYRHGDRTPAWLSEGRLHRSLVCECEAVTAGEVQYAVENLNVNSLLDLRRRTRVGMGTCQGELCACRAAGLLQRFNVTTSAQSIEQLSTFLNERWKGVQPIAWGDALRESEFTRWVYQGLCGLEKEQKDAL</sequence>
<gene>
    <name type="primary">glpA</name>
    <name type="ordered locus">Z3499</name>
    <name type="ordered locus">ECs3126</name>
</gene>
<dbReference type="EC" id="1.1.5.3"/>
<dbReference type="EMBL" id="AE005174">
    <property type="protein sequence ID" value="AAG57372.1"/>
    <property type="molecule type" value="Genomic_DNA"/>
</dbReference>
<dbReference type="EMBL" id="BA000007">
    <property type="protein sequence ID" value="BAB36549.1"/>
    <property type="molecule type" value="Genomic_DNA"/>
</dbReference>
<dbReference type="PIR" id="F91019">
    <property type="entry name" value="F91019"/>
</dbReference>
<dbReference type="RefSeq" id="NP_311153.1">
    <property type="nucleotide sequence ID" value="NC_002695.1"/>
</dbReference>
<dbReference type="RefSeq" id="WP_000857257.1">
    <property type="nucleotide sequence ID" value="NZ_VOAI01000001.1"/>
</dbReference>
<dbReference type="SMR" id="P0A9C1"/>
<dbReference type="STRING" id="155864.Z3499"/>
<dbReference type="GeneID" id="916834"/>
<dbReference type="GeneID" id="93774933"/>
<dbReference type="KEGG" id="ece:Z3499"/>
<dbReference type="KEGG" id="ecs:ECs_3126"/>
<dbReference type="PATRIC" id="fig|386585.9.peg.3260"/>
<dbReference type="eggNOG" id="COG0578">
    <property type="taxonomic scope" value="Bacteria"/>
</dbReference>
<dbReference type="HOGENOM" id="CLU_015740_0_1_6"/>
<dbReference type="OMA" id="GVMTIMN"/>
<dbReference type="UniPathway" id="UPA00618">
    <property type="reaction ID" value="UER00673"/>
</dbReference>
<dbReference type="Proteomes" id="UP000000558">
    <property type="component" value="Chromosome"/>
</dbReference>
<dbReference type="Proteomes" id="UP000002519">
    <property type="component" value="Chromosome"/>
</dbReference>
<dbReference type="GO" id="GO:0009331">
    <property type="term" value="C:glycerol-3-phosphate dehydrogenase (FAD) complex"/>
    <property type="evidence" value="ECO:0007669"/>
    <property type="project" value="InterPro"/>
</dbReference>
<dbReference type="GO" id="GO:0005886">
    <property type="term" value="C:plasma membrane"/>
    <property type="evidence" value="ECO:0007669"/>
    <property type="project" value="UniProtKB-SubCell"/>
</dbReference>
<dbReference type="GO" id="GO:0050660">
    <property type="term" value="F:flavin adenine dinucleotide binding"/>
    <property type="evidence" value="ECO:0007669"/>
    <property type="project" value="InterPro"/>
</dbReference>
<dbReference type="GO" id="GO:0010181">
    <property type="term" value="F:FMN binding"/>
    <property type="evidence" value="ECO:0007669"/>
    <property type="project" value="InterPro"/>
</dbReference>
<dbReference type="GO" id="GO:0004368">
    <property type="term" value="F:glycerol-3-phosphate dehydrogenase (quinone) activity"/>
    <property type="evidence" value="ECO:0007669"/>
    <property type="project" value="UniProtKB-EC"/>
</dbReference>
<dbReference type="GO" id="GO:0019563">
    <property type="term" value="P:glycerol catabolic process"/>
    <property type="evidence" value="ECO:0007669"/>
    <property type="project" value="UniProtKB-UniPathway"/>
</dbReference>
<dbReference type="GO" id="GO:0046168">
    <property type="term" value="P:glycerol-3-phosphate catabolic process"/>
    <property type="evidence" value="ECO:0007669"/>
    <property type="project" value="TreeGrafter"/>
</dbReference>
<dbReference type="CDD" id="cd19946">
    <property type="entry name" value="GlpA-like_Fer2_BFD-like"/>
    <property type="match status" value="1"/>
</dbReference>
<dbReference type="FunFam" id="1.10.10.1100:FF:000003">
    <property type="entry name" value="Glycerol-3-phosphate dehydrogenase"/>
    <property type="match status" value="1"/>
</dbReference>
<dbReference type="FunFam" id="3.50.50.60:FF:000096">
    <property type="entry name" value="Glycerol-3-phosphate dehydrogenase"/>
    <property type="match status" value="1"/>
</dbReference>
<dbReference type="FunFam" id="3.50.50.60:FF:000102">
    <property type="entry name" value="Glycerol-3-phosphate dehydrogenase"/>
    <property type="match status" value="1"/>
</dbReference>
<dbReference type="FunFam" id="3.50.50.60:FF:000106">
    <property type="entry name" value="Glycerol-3-phosphate dehydrogenase"/>
    <property type="match status" value="1"/>
</dbReference>
<dbReference type="Gene3D" id="1.10.10.1100">
    <property type="entry name" value="BFD-like [2Fe-2S]-binding domain"/>
    <property type="match status" value="1"/>
</dbReference>
<dbReference type="Gene3D" id="3.50.50.60">
    <property type="entry name" value="FAD/NAD(P)-binding domain"/>
    <property type="match status" value="3"/>
</dbReference>
<dbReference type="InterPro" id="IPR007419">
    <property type="entry name" value="BFD-like_2Fe2S-bd_dom"/>
</dbReference>
<dbReference type="InterPro" id="IPR041854">
    <property type="entry name" value="BFD-like_2Fe2S-bd_dom_sf"/>
</dbReference>
<dbReference type="InterPro" id="IPR006076">
    <property type="entry name" value="FAD-dep_OxRdtase"/>
</dbReference>
<dbReference type="InterPro" id="IPR036188">
    <property type="entry name" value="FAD/NAD-bd_sf"/>
</dbReference>
<dbReference type="InterPro" id="IPR000447">
    <property type="entry name" value="G3P_DH_FAD-dep"/>
</dbReference>
<dbReference type="InterPro" id="IPR017752">
    <property type="entry name" value="G3P_DH_GlpA_su"/>
</dbReference>
<dbReference type="NCBIfam" id="TIGR03377">
    <property type="entry name" value="glycerol3P_GlpA"/>
    <property type="match status" value="1"/>
</dbReference>
<dbReference type="NCBIfam" id="NF008313">
    <property type="entry name" value="PRK11101.1"/>
    <property type="match status" value="1"/>
</dbReference>
<dbReference type="PANTHER" id="PTHR11985:SF35">
    <property type="entry name" value="ANAEROBIC GLYCEROL-3-PHOSPHATE DEHYDROGENASE SUBUNIT A"/>
    <property type="match status" value="1"/>
</dbReference>
<dbReference type="PANTHER" id="PTHR11985">
    <property type="entry name" value="GLYCEROL-3-PHOSPHATE DEHYDROGENASE"/>
    <property type="match status" value="1"/>
</dbReference>
<dbReference type="Pfam" id="PF01266">
    <property type="entry name" value="DAO"/>
    <property type="match status" value="1"/>
</dbReference>
<dbReference type="Pfam" id="PF04324">
    <property type="entry name" value="Fer2_BFD"/>
    <property type="match status" value="1"/>
</dbReference>
<dbReference type="PRINTS" id="PR01001">
    <property type="entry name" value="FADG3PDH"/>
</dbReference>
<dbReference type="SUPFAM" id="SSF51905">
    <property type="entry name" value="FAD/NAD(P)-binding domain"/>
    <property type="match status" value="1"/>
</dbReference>
<dbReference type="PROSITE" id="PS00977">
    <property type="entry name" value="FAD_G3PDH_1"/>
    <property type="match status" value="1"/>
</dbReference>
<dbReference type="PROSITE" id="PS00978">
    <property type="entry name" value="FAD_G3PDH_2"/>
    <property type="match status" value="1"/>
</dbReference>
<accession>P0A9C1</accession>
<accession>P13032</accession>
<accession>P78238</accession>
<keyword id="KW-0997">Cell inner membrane</keyword>
<keyword id="KW-1003">Cell membrane</keyword>
<keyword id="KW-0274">FAD</keyword>
<keyword id="KW-0285">Flavoprotein</keyword>
<keyword id="KW-0472">Membrane</keyword>
<keyword id="KW-0560">Oxidoreductase</keyword>
<keyword id="KW-1185">Reference proteome</keyword>